<reference key="1">
    <citation type="submission" date="2015-01" db="EMBL/GenBank/DDBJ databases">
        <title>Evolutionary Origins and Diversification of the Mycorrhizal Mutualists.</title>
        <authorList>
            <consortium name="DOE Joint Genome Institute"/>
            <consortium name="Mycorrhizal Genomics Consortium"/>
            <person name="Kohler A."/>
            <person name="Kuo A."/>
            <person name="Nagy L.G."/>
            <person name="Floudas D."/>
            <person name="Copeland A."/>
            <person name="Barry K.W."/>
            <person name="Cichocki N."/>
            <person name="Veneault-Fourrey C."/>
            <person name="LaButti K."/>
            <person name="Lindquist E.A."/>
            <person name="Lipzen A."/>
            <person name="Lundell T."/>
            <person name="Morin E."/>
            <person name="Murat C."/>
            <person name="Riley R."/>
            <person name="Ohm R."/>
            <person name="Sun H."/>
            <person name="Tunlid A."/>
            <person name="Henrissat B."/>
            <person name="Grigoriev I.V."/>
            <person name="Hibbett D.S."/>
            <person name="Martin F."/>
        </authorList>
    </citation>
    <scope>NUCLEOTIDE SEQUENCE [LARGE SCALE GENOMIC DNA]</scope>
    <source>
        <strain>Zn</strain>
    </source>
</reference>
<reference key="2">
    <citation type="journal article" date="2023" name="Appl. Microbiol. Biotechnol.">
        <title>Delineation of the CYP505E subfamily of fungal self-sufficient in-chain hydroxylating cytochrome P450 monooxygenases.</title>
        <authorList>
            <person name="Smit M.S."/>
            <person name="Maseme M.J."/>
            <person name="van Marwijk J."/>
            <person name="Aschenbrenner J.C."/>
            <person name="Opperman D.J."/>
        </authorList>
    </citation>
    <scope>FUNCTION</scope>
    <scope>CATALYTIC ACTIVITY</scope>
</reference>
<organism>
    <name type="scientific">Oidiodendron maius (strain Zn)</name>
    <dbReference type="NCBI Taxonomy" id="913774"/>
    <lineage>
        <taxon>Eukaryota</taxon>
        <taxon>Fungi</taxon>
        <taxon>Dikarya</taxon>
        <taxon>Ascomycota</taxon>
        <taxon>Pezizomycotina</taxon>
        <taxon>Leotiomycetes</taxon>
        <taxon>Leotiomycetes incertae sedis</taxon>
        <taxon>Myxotrichaceae</taxon>
        <taxon>Oidiodendron</taxon>
    </lineage>
</organism>
<feature type="chain" id="PRO_0000459044" description="Self-sufficient cytochrome P450 monooxygenase CYP505AG1">
    <location>
        <begin position="1"/>
        <end position="1073"/>
    </location>
</feature>
<feature type="domain" description="Flavodoxin-like" evidence="3">
    <location>
        <begin position="501"/>
        <end position="644"/>
    </location>
</feature>
<feature type="domain" description="FAD-binding FR-type" evidence="4">
    <location>
        <begin position="680"/>
        <end position="909"/>
    </location>
</feature>
<feature type="binding site" description="axial binding residue" evidence="1">
    <location>
        <position position="409"/>
    </location>
    <ligand>
        <name>heme</name>
        <dbReference type="ChEBI" id="CHEBI:30413"/>
    </ligand>
    <ligandPart>
        <name>Fe</name>
        <dbReference type="ChEBI" id="CHEBI:18248"/>
    </ligandPart>
</feature>
<feature type="binding site" evidence="3">
    <location>
        <begin position="507"/>
        <end position="511"/>
    </location>
    <ligand>
        <name>FMN</name>
        <dbReference type="ChEBI" id="CHEBI:58210"/>
    </ligand>
</feature>
<feature type="binding site" evidence="3">
    <location>
        <begin position="588"/>
        <end position="620"/>
    </location>
    <ligand>
        <name>FMN</name>
        <dbReference type="ChEBI" id="CHEBI:58210"/>
    </ligand>
</feature>
<protein>
    <recommendedName>
        <fullName evidence="6">Self-sufficient cytochrome P450 monooxygenase CYP505AG1</fullName>
    </recommendedName>
    <alternativeName>
        <fullName evidence="6">Bifunctional cytochrome P450/NADPH--P450 reductase CYP505AG1</fullName>
    </alternativeName>
    <domain>
        <recommendedName>
            <fullName evidence="6">Cytochrome P450 monooxygenase</fullName>
            <ecNumber evidence="5">1.14.14.1</ecNumber>
        </recommendedName>
    </domain>
    <domain>
        <recommendedName>
            <fullName evidence="6">NADPH--cytochrome P450 reductase</fullName>
            <ecNumber evidence="5">1.6.2.4</ecNumber>
        </recommendedName>
    </domain>
</protein>
<gene>
    <name evidence="6" type="primary">CYP505AG1</name>
    <name type="ORF">OIDMADRAFT_53060</name>
</gene>
<dbReference type="EC" id="1.14.14.1" evidence="5"/>
<dbReference type="EC" id="1.6.2.4" evidence="5"/>
<dbReference type="EMBL" id="KN832874">
    <property type="protein sequence ID" value="KIN03265.1"/>
    <property type="molecule type" value="Genomic_DNA"/>
</dbReference>
<dbReference type="SMR" id="A0A0C3HJL3"/>
<dbReference type="STRING" id="913774.A0A0C3HJL3"/>
<dbReference type="HOGENOM" id="CLU_001570_7_0_1"/>
<dbReference type="InParanoid" id="A0A0C3HJL3"/>
<dbReference type="OrthoDB" id="1470350at2759"/>
<dbReference type="Proteomes" id="UP000054321">
    <property type="component" value="Unassembled WGS sequence"/>
</dbReference>
<dbReference type="GO" id="GO:0005829">
    <property type="term" value="C:cytosol"/>
    <property type="evidence" value="ECO:0007669"/>
    <property type="project" value="TreeGrafter"/>
</dbReference>
<dbReference type="GO" id="GO:0070330">
    <property type="term" value="F:aromatase activity"/>
    <property type="evidence" value="ECO:0007669"/>
    <property type="project" value="InterPro"/>
</dbReference>
<dbReference type="GO" id="GO:0050660">
    <property type="term" value="F:flavin adenine dinucleotide binding"/>
    <property type="evidence" value="ECO:0007669"/>
    <property type="project" value="TreeGrafter"/>
</dbReference>
<dbReference type="GO" id="GO:0010181">
    <property type="term" value="F:FMN binding"/>
    <property type="evidence" value="ECO:0007669"/>
    <property type="project" value="InterPro"/>
</dbReference>
<dbReference type="GO" id="GO:0020037">
    <property type="term" value="F:heme binding"/>
    <property type="evidence" value="ECO:0007669"/>
    <property type="project" value="InterPro"/>
</dbReference>
<dbReference type="GO" id="GO:0005506">
    <property type="term" value="F:iron ion binding"/>
    <property type="evidence" value="ECO:0007669"/>
    <property type="project" value="InterPro"/>
</dbReference>
<dbReference type="GO" id="GO:0003958">
    <property type="term" value="F:NADPH-hemoprotein reductase activity"/>
    <property type="evidence" value="ECO:0007669"/>
    <property type="project" value="UniProtKB-EC"/>
</dbReference>
<dbReference type="CDD" id="cd06206">
    <property type="entry name" value="bifunctional_CYPOR"/>
    <property type="match status" value="1"/>
</dbReference>
<dbReference type="CDD" id="cd11068">
    <property type="entry name" value="CYP120A1"/>
    <property type="match status" value="1"/>
</dbReference>
<dbReference type="FunFam" id="1.10.630.10:FF:000040">
    <property type="entry name" value="Bifunctional cytochrome P450/NADPH--P450 reductase"/>
    <property type="match status" value="1"/>
</dbReference>
<dbReference type="Gene3D" id="3.40.50.360">
    <property type="match status" value="1"/>
</dbReference>
<dbReference type="Gene3D" id="1.10.630.10">
    <property type="entry name" value="Cytochrome P450"/>
    <property type="match status" value="1"/>
</dbReference>
<dbReference type="Gene3D" id="1.20.990.10">
    <property type="entry name" value="NADPH-cytochrome p450 Reductase, Chain A, domain 3"/>
    <property type="match status" value="1"/>
</dbReference>
<dbReference type="Gene3D" id="3.40.50.80">
    <property type="entry name" value="Nucleotide-binding domain of ferredoxin-NADP reductase (FNR) module"/>
    <property type="match status" value="1"/>
</dbReference>
<dbReference type="Gene3D" id="2.40.30.10">
    <property type="entry name" value="Translation factors"/>
    <property type="match status" value="1"/>
</dbReference>
<dbReference type="InterPro" id="IPR023206">
    <property type="entry name" value="Bifunctional_P450_P450_red"/>
</dbReference>
<dbReference type="InterPro" id="IPR003097">
    <property type="entry name" value="CysJ-like_FAD-binding"/>
</dbReference>
<dbReference type="InterPro" id="IPR001128">
    <property type="entry name" value="Cyt_P450"/>
</dbReference>
<dbReference type="InterPro" id="IPR017972">
    <property type="entry name" value="Cyt_P450_CS"/>
</dbReference>
<dbReference type="InterPro" id="IPR036396">
    <property type="entry name" value="Cyt_P450_sf"/>
</dbReference>
<dbReference type="InterPro" id="IPR017927">
    <property type="entry name" value="FAD-bd_FR_type"/>
</dbReference>
<dbReference type="InterPro" id="IPR001094">
    <property type="entry name" value="Flavdoxin-like"/>
</dbReference>
<dbReference type="InterPro" id="IPR008254">
    <property type="entry name" value="Flavodoxin/NO_synth"/>
</dbReference>
<dbReference type="InterPro" id="IPR001709">
    <property type="entry name" value="Flavoprot_Pyr_Nucl_cyt_Rdtase"/>
</dbReference>
<dbReference type="InterPro" id="IPR029039">
    <property type="entry name" value="Flavoprotein-like_sf"/>
</dbReference>
<dbReference type="InterPro" id="IPR039261">
    <property type="entry name" value="FNR_nucleotide-bd"/>
</dbReference>
<dbReference type="InterPro" id="IPR023173">
    <property type="entry name" value="NADPH_Cyt_P450_Rdtase_alpha"/>
</dbReference>
<dbReference type="InterPro" id="IPR001433">
    <property type="entry name" value="OxRdtase_FAD/NAD-bd"/>
</dbReference>
<dbReference type="InterPro" id="IPR017938">
    <property type="entry name" value="Riboflavin_synthase-like_b-brl"/>
</dbReference>
<dbReference type="PANTHER" id="PTHR19384:SF127">
    <property type="entry name" value="BIFUNCTIONAL CYTOCHROME P450_NADPH--P450 REDUCTASE"/>
    <property type="match status" value="1"/>
</dbReference>
<dbReference type="PANTHER" id="PTHR19384">
    <property type="entry name" value="NITRIC OXIDE SYNTHASE-RELATED"/>
    <property type="match status" value="1"/>
</dbReference>
<dbReference type="Pfam" id="PF00667">
    <property type="entry name" value="FAD_binding_1"/>
    <property type="match status" value="1"/>
</dbReference>
<dbReference type="Pfam" id="PF00258">
    <property type="entry name" value="Flavodoxin_1"/>
    <property type="match status" value="1"/>
</dbReference>
<dbReference type="Pfam" id="PF00175">
    <property type="entry name" value="NAD_binding_1"/>
    <property type="match status" value="1"/>
</dbReference>
<dbReference type="Pfam" id="PF00067">
    <property type="entry name" value="p450"/>
    <property type="match status" value="1"/>
</dbReference>
<dbReference type="PIRSF" id="PIRSF000209">
    <property type="entry name" value="Bifunctional_P450_P450R"/>
    <property type="match status" value="1"/>
</dbReference>
<dbReference type="PRINTS" id="PR00369">
    <property type="entry name" value="FLAVODOXIN"/>
</dbReference>
<dbReference type="PRINTS" id="PR00371">
    <property type="entry name" value="FPNCR"/>
</dbReference>
<dbReference type="SUPFAM" id="SSF48264">
    <property type="entry name" value="Cytochrome P450"/>
    <property type="match status" value="1"/>
</dbReference>
<dbReference type="SUPFAM" id="SSF52343">
    <property type="entry name" value="Ferredoxin reductase-like, C-terminal NADP-linked domain"/>
    <property type="match status" value="1"/>
</dbReference>
<dbReference type="SUPFAM" id="SSF52218">
    <property type="entry name" value="Flavoproteins"/>
    <property type="match status" value="1"/>
</dbReference>
<dbReference type="SUPFAM" id="SSF63380">
    <property type="entry name" value="Riboflavin synthase domain-like"/>
    <property type="match status" value="1"/>
</dbReference>
<dbReference type="PROSITE" id="PS00086">
    <property type="entry name" value="CYTOCHROME_P450"/>
    <property type="match status" value="1"/>
</dbReference>
<dbReference type="PROSITE" id="PS51384">
    <property type="entry name" value="FAD_FR"/>
    <property type="match status" value="1"/>
</dbReference>
<dbReference type="PROSITE" id="PS50902">
    <property type="entry name" value="FLAVODOXIN_LIKE"/>
    <property type="match status" value="1"/>
</dbReference>
<evidence type="ECO:0000250" key="1">
    <source>
        <dbReference type="UniProtKB" id="P14779"/>
    </source>
</evidence>
<evidence type="ECO:0000250" key="2">
    <source>
        <dbReference type="UniProtKB" id="Q9Y8G7"/>
    </source>
</evidence>
<evidence type="ECO:0000255" key="3">
    <source>
        <dbReference type="PROSITE-ProRule" id="PRU00088"/>
    </source>
</evidence>
<evidence type="ECO:0000255" key="4">
    <source>
        <dbReference type="PROSITE-ProRule" id="PRU00716"/>
    </source>
</evidence>
<evidence type="ECO:0000269" key="5">
    <source>
    </source>
</evidence>
<evidence type="ECO:0000303" key="6">
    <source>
    </source>
</evidence>
<evidence type="ECO:0000305" key="7"/>
<proteinExistence type="evidence at protein level"/>
<keyword id="KW-0249">Electron transport</keyword>
<keyword id="KW-0274">FAD</keyword>
<keyword id="KW-0285">Flavoprotein</keyword>
<keyword id="KW-0288">FMN</keyword>
<keyword id="KW-0349">Heme</keyword>
<keyword id="KW-0408">Iron</keyword>
<keyword id="KW-0479">Metal-binding</keyword>
<keyword id="KW-0503">Monooxygenase</keyword>
<keyword id="KW-0521">NADP</keyword>
<keyword id="KW-0560">Oxidoreductase</keyword>
<keyword id="KW-1185">Reference proteome</keyword>
<keyword id="KW-0813">Transport</keyword>
<sequence>MTKKNHALIPIPGPSVWPLLGNLFDIDTEHGLASVLEMGRSYGDIFQLVLGGNKLVFLQTHALFDEVCDESRFCKVVVSGLGNLRAGVNDGLFTAHDGEHNWGVAHRIIMPIFGPIKIRETLGGMKDVCQELSLKWARYGPDHRIDIAGDLTRLTLDTIAFCTMGYRFNSFYRNSDVHPFVKSMVGFLREADKSSMIPEYLNAFRWKARRSFLGDIASMREMSMMILNLRRGNPSDRDDLLNALLHGRDPKTGEGMSDESIINNLITFLVAGHETTSGALSFVFYYLLTNPESLKNAREEVDRVIGAGNITADHLSKLPYIDAVLREALRLNPTGPAITLGAREDTTLGGKYAVKKGEPVLCMFHNIHRDKKVYGEDADEWKPERMMDENFNKLPKNAWKPFGNGTRGCIGRAFAWQESQLVIASILQNFDLTLDNPDYKLEIVETLTIKPGNFYVRAKLRSGRTPRELCGFSNPISTNIQIKNGTIAPANDGQVGNSTPVTILYGSNSGTCEALAHRLARDAPSYGYSVTTVATLDSVIGILPRAKDELVVIITCSYDGLPADNAVRFCNWLKTLDEDALGGMPFAVFACGHHDWAKTFYKVPIMIDELLARAGAHRVAQMGKANSAVSDMFSDLENWEDEHLWSSSSAAGNETVDNVARTEVKQDITITNPRARALHHNAVECIVSETHKLSESGSALKYHVEIQLPANMKYAPGDHLSVLPINPRQNVRRALARFHLAGDSVLSVARIGHMGTLGQETLSAFDVFASYVELSQPATRRNIATLLSVTPEGEGRYELAELGGAAFESQIRDMRVSVLDLLERYKAIKLCVGAFIDMLPPLRVRTYSISSSALWKPSHASLTISVLAQPALSGQGSFLGVASNFLADLVPGDAVHFTIRPCKKQFHLPDDASAHPIIMVAAGSGIAPFRGFIQDRALQRRNGVQLQPAILFFGCRGSKQDDLYRQELDEFEAEGVVSVRRAFSGEETVSISESRMYVQDRMWADRAEVIQLWNLGAKIYVCGGINMADGVREIFNEIVGPTEVDGKRGAESLNKLSEETMSARYVAEIFSQT</sequence>
<comment type="function">
    <text evidence="5">Self-sufficient cytochrome P450 monooxygenase that catalyzes the regioselective in-chain hydroxylation of alkanes, fatty alcohols, and fatty acids, giving sub-terminal hydroxylation by acting preferentially on the omega-2 position (PubMed:36607403). Prefers fatty acids as substrates, since it hydroxylates the small amounts of dodecanoic acid formed in the presence of an excess of 1-dodecanol (PubMed:36607403).</text>
</comment>
<comment type="catalytic activity">
    <reaction evidence="5">
        <text>2 oxidized [cytochrome P450] + NADPH = 2 reduced [cytochrome P450] + NADP(+) + H(+)</text>
        <dbReference type="Rhea" id="RHEA:24040"/>
        <dbReference type="Rhea" id="RHEA-COMP:14627"/>
        <dbReference type="Rhea" id="RHEA-COMP:14628"/>
        <dbReference type="ChEBI" id="CHEBI:15378"/>
        <dbReference type="ChEBI" id="CHEBI:55376"/>
        <dbReference type="ChEBI" id="CHEBI:57783"/>
        <dbReference type="ChEBI" id="CHEBI:58349"/>
        <dbReference type="ChEBI" id="CHEBI:60344"/>
        <dbReference type="EC" id="1.6.2.4"/>
    </reaction>
</comment>
<comment type="catalytic activity">
    <reaction evidence="5">
        <text>an organic molecule + reduced [NADPH--hemoprotein reductase] + O2 = an alcohol + oxidized [NADPH--hemoprotein reductase] + H2O + H(+)</text>
        <dbReference type="Rhea" id="RHEA:17149"/>
        <dbReference type="Rhea" id="RHEA-COMP:11964"/>
        <dbReference type="Rhea" id="RHEA-COMP:11965"/>
        <dbReference type="ChEBI" id="CHEBI:15377"/>
        <dbReference type="ChEBI" id="CHEBI:15378"/>
        <dbReference type="ChEBI" id="CHEBI:15379"/>
        <dbReference type="ChEBI" id="CHEBI:30879"/>
        <dbReference type="ChEBI" id="CHEBI:57618"/>
        <dbReference type="ChEBI" id="CHEBI:58210"/>
        <dbReference type="ChEBI" id="CHEBI:142491"/>
        <dbReference type="EC" id="1.14.14.1"/>
    </reaction>
</comment>
<comment type="catalytic activity">
    <reaction evidence="5">
        <text>dodecanoate + reduced [NADPH--hemoprotein reductase] + O2 = 10-hydroxydodecanoate + oxidized [NADPH--hemoprotein reductase] + H2O + H(+)</text>
        <dbReference type="Rhea" id="RHEA:66892"/>
        <dbReference type="Rhea" id="RHEA-COMP:11964"/>
        <dbReference type="Rhea" id="RHEA-COMP:11965"/>
        <dbReference type="ChEBI" id="CHEBI:15377"/>
        <dbReference type="ChEBI" id="CHEBI:15378"/>
        <dbReference type="ChEBI" id="CHEBI:15379"/>
        <dbReference type="ChEBI" id="CHEBI:18262"/>
        <dbReference type="ChEBI" id="CHEBI:57618"/>
        <dbReference type="ChEBI" id="CHEBI:58210"/>
        <dbReference type="ChEBI" id="CHEBI:167542"/>
    </reaction>
    <physiologicalReaction direction="left-to-right" evidence="5">
        <dbReference type="Rhea" id="RHEA:66893"/>
    </physiologicalReaction>
</comment>
<comment type="catalytic activity">
    <reaction evidence="5">
        <text>tetradecanoate + reduced [NADPH--hemoprotein reductase] + O2 = 12-hydroxytetradecanoate + oxidized [NADPH--hemoprotein reductase] + H2O + H(+)</text>
        <dbReference type="Rhea" id="RHEA:66876"/>
        <dbReference type="Rhea" id="RHEA-COMP:11964"/>
        <dbReference type="Rhea" id="RHEA-COMP:11965"/>
        <dbReference type="ChEBI" id="CHEBI:15377"/>
        <dbReference type="ChEBI" id="CHEBI:15378"/>
        <dbReference type="ChEBI" id="CHEBI:15379"/>
        <dbReference type="ChEBI" id="CHEBI:30807"/>
        <dbReference type="ChEBI" id="CHEBI:57618"/>
        <dbReference type="ChEBI" id="CHEBI:58210"/>
        <dbReference type="ChEBI" id="CHEBI:167546"/>
    </reaction>
    <physiologicalReaction direction="left-to-right" evidence="5">
        <dbReference type="Rhea" id="RHEA:66877"/>
    </physiologicalReaction>
</comment>
<comment type="cofactor">
    <cofactor evidence="2">
        <name>FAD</name>
        <dbReference type="ChEBI" id="CHEBI:57692"/>
    </cofactor>
    <text evidence="2">Binds 1 FAD.</text>
</comment>
<comment type="cofactor">
    <cofactor evidence="2">
        <name>FMN</name>
        <dbReference type="ChEBI" id="CHEBI:58210"/>
    </cofactor>
    <text evidence="2">Binds 1 FMN.</text>
</comment>
<comment type="cofactor">
    <cofactor evidence="2">
        <name>heme</name>
        <dbReference type="ChEBI" id="CHEBI:30413"/>
    </cofactor>
</comment>
<comment type="similarity">
    <text evidence="7">In the N-terminal section; belongs to the cytochrome P450 family.</text>
</comment>
<accession>A0A0C3HJL3</accession>
<name>CYAG1_OIDMZ</name>